<gene>
    <name type="primary">dhp-1</name>
    <name type="ORF">R06C7.3</name>
</gene>
<dbReference type="EC" id="3.5.2.2" evidence="4"/>
<dbReference type="EMBL" id="AB040992">
    <property type="protein sequence ID" value="BAB21560.1"/>
    <property type="molecule type" value="mRNA"/>
</dbReference>
<dbReference type="EMBL" id="Z71266">
    <property type="protein sequence ID" value="CAD24483.1"/>
    <property type="molecule type" value="Genomic_DNA"/>
</dbReference>
<dbReference type="PIR" id="T23968">
    <property type="entry name" value="T23968"/>
</dbReference>
<dbReference type="RefSeq" id="NP_001021583.1">
    <property type="nucleotide sequence ID" value="NM_001026412.5"/>
</dbReference>
<dbReference type="SMR" id="Q21773"/>
<dbReference type="BioGRID" id="37907">
    <property type="interactions" value="2"/>
</dbReference>
<dbReference type="FunCoup" id="Q21773">
    <property type="interactions" value="1238"/>
</dbReference>
<dbReference type="STRING" id="6239.R06C7.3.3"/>
<dbReference type="MEROPS" id="M38.973"/>
<dbReference type="PaxDb" id="6239-R06C7.3.1"/>
<dbReference type="PeptideAtlas" id="Q21773"/>
<dbReference type="EnsemblMetazoa" id="R06C7.3.1">
    <property type="protein sequence ID" value="R06C7.3.1"/>
    <property type="gene ID" value="WBGene00000963"/>
</dbReference>
<dbReference type="EnsemblMetazoa" id="R06C7.3.2">
    <property type="protein sequence ID" value="R06C7.3.2"/>
    <property type="gene ID" value="WBGene00000963"/>
</dbReference>
<dbReference type="GeneID" id="172464"/>
<dbReference type="KEGG" id="cel:CELE_R06C7.3"/>
<dbReference type="UCSC" id="R06C7.3.3">
    <property type="organism name" value="c. elegans"/>
</dbReference>
<dbReference type="AGR" id="WB:WBGene00000963"/>
<dbReference type="CTD" id="172464"/>
<dbReference type="WormBase" id="R06C7.3">
    <property type="protein sequence ID" value="CE30293"/>
    <property type="gene ID" value="WBGene00000963"/>
    <property type="gene designation" value="dhp-1"/>
</dbReference>
<dbReference type="eggNOG" id="KOG2584">
    <property type="taxonomic scope" value="Eukaryota"/>
</dbReference>
<dbReference type="GeneTree" id="ENSGT01030000234527"/>
<dbReference type="HOGENOM" id="CLU_015572_2_2_1"/>
<dbReference type="InParanoid" id="Q21773"/>
<dbReference type="OMA" id="RSSIKVH"/>
<dbReference type="OrthoDB" id="10258955at2759"/>
<dbReference type="PhylomeDB" id="Q21773"/>
<dbReference type="BRENDA" id="3.5.2.2">
    <property type="organism ID" value="1045"/>
</dbReference>
<dbReference type="Reactome" id="R-CEL-399956">
    <property type="pathway name" value="CRMPs in Sema3A signaling"/>
</dbReference>
<dbReference type="PRO" id="PR:Q21773"/>
<dbReference type="Proteomes" id="UP000001940">
    <property type="component" value="Chromosome I"/>
</dbReference>
<dbReference type="Bgee" id="WBGene00000963">
    <property type="expression patterns" value="Expressed in larva and 3 other cell types or tissues"/>
</dbReference>
<dbReference type="GO" id="GO:0005829">
    <property type="term" value="C:cytosol"/>
    <property type="evidence" value="ECO:0000318"/>
    <property type="project" value="GO_Central"/>
</dbReference>
<dbReference type="GO" id="GO:0005634">
    <property type="term" value="C:nucleus"/>
    <property type="evidence" value="ECO:0000314"/>
    <property type="project" value="WormBase"/>
</dbReference>
<dbReference type="GO" id="GO:0004157">
    <property type="term" value="F:dihydropyrimidinase activity"/>
    <property type="evidence" value="ECO:0000250"/>
    <property type="project" value="WormBase"/>
</dbReference>
<dbReference type="GO" id="GO:0016812">
    <property type="term" value="F:hydrolase activity, acting on carbon-nitrogen (but not peptide) bonds, in cyclic amides"/>
    <property type="evidence" value="ECO:0000314"/>
    <property type="project" value="WormBase"/>
</dbReference>
<dbReference type="GO" id="GO:0046872">
    <property type="term" value="F:metal ion binding"/>
    <property type="evidence" value="ECO:0007669"/>
    <property type="project" value="UniProtKB-KW"/>
</dbReference>
<dbReference type="GO" id="GO:0046113">
    <property type="term" value="P:nucleobase catabolic process"/>
    <property type="evidence" value="ECO:0000250"/>
    <property type="project" value="WormBase"/>
</dbReference>
<dbReference type="GO" id="GO:0006208">
    <property type="term" value="P:pyrimidine nucleobase catabolic process"/>
    <property type="evidence" value="ECO:0000314"/>
    <property type="project" value="WormBase"/>
</dbReference>
<dbReference type="CDD" id="cd01314">
    <property type="entry name" value="D-HYD"/>
    <property type="match status" value="1"/>
</dbReference>
<dbReference type="FunFam" id="3.20.20.140:FF:000001">
    <property type="entry name" value="Dihydropyrimidinase like 3"/>
    <property type="match status" value="1"/>
</dbReference>
<dbReference type="Gene3D" id="3.20.20.140">
    <property type="entry name" value="Metal-dependent hydrolases"/>
    <property type="match status" value="1"/>
</dbReference>
<dbReference type="Gene3D" id="2.30.40.10">
    <property type="entry name" value="Urease, subunit C, domain 1"/>
    <property type="match status" value="1"/>
</dbReference>
<dbReference type="InterPro" id="IPR006680">
    <property type="entry name" value="Amidohydro-rel"/>
</dbReference>
<dbReference type="InterPro" id="IPR011778">
    <property type="entry name" value="Hydantoinase/dihydroPyrase"/>
</dbReference>
<dbReference type="InterPro" id="IPR011059">
    <property type="entry name" value="Metal-dep_hydrolase_composite"/>
</dbReference>
<dbReference type="InterPro" id="IPR032466">
    <property type="entry name" value="Metal_Hydrolase"/>
</dbReference>
<dbReference type="InterPro" id="IPR050378">
    <property type="entry name" value="Metallo-dep_Hydrolases_sf"/>
</dbReference>
<dbReference type="NCBIfam" id="TIGR02033">
    <property type="entry name" value="D-hydantoinase"/>
    <property type="match status" value="1"/>
</dbReference>
<dbReference type="PANTHER" id="PTHR11647:SF65">
    <property type="entry name" value="DIHYDROPYRIMIDINASE 1"/>
    <property type="match status" value="1"/>
</dbReference>
<dbReference type="PANTHER" id="PTHR11647">
    <property type="entry name" value="HYDRANTOINASE/DIHYDROPYRIMIDINASE FAMILY MEMBER"/>
    <property type="match status" value="1"/>
</dbReference>
<dbReference type="Pfam" id="PF01979">
    <property type="entry name" value="Amidohydro_1"/>
    <property type="match status" value="1"/>
</dbReference>
<dbReference type="SUPFAM" id="SSF51338">
    <property type="entry name" value="Composite domain of metallo-dependent hydrolases"/>
    <property type="match status" value="2"/>
</dbReference>
<dbReference type="SUPFAM" id="SSF51556">
    <property type="entry name" value="Metallo-dependent hydrolases"/>
    <property type="match status" value="1"/>
</dbReference>
<accession>Q21773</accession>
<accession>Q9BPU2</accession>
<sequence>MSPPLVIKNGTVVNEDGMFKADVLVRNGIIVEVSPNITALPDTEVIDATDRLVIPGGIDPHTHMQMPYMGEVTKDDFLKGTEAAVAGGTTMIIDFCCPDHRNGESLIAGYNRWRSWADPKVCCDYGLSVAITMWRPETAEQMAIITSPEFGVNSFKFYMAYENTLMVRDDELFRGMQECAKLRALARVHCENGSVIKEKEIDLLAKGVTGPEGHTQSRPEEIEAEATNRACVLAAQANCPVYIVHVMTKGAASAISHHRAQGSIVFGEPIAAGLALDGSHYYNEDWLHAARYVMSPPLSRDPTTPELLMKLLAAGELHLTGTDNCTYDCRQKSLGKGNFTKIPNGINGVEDRMSVVWEKGVHSGIIDPMRYVSITSSTAAKIFNIYPRKGRIAVGSDADIVIFNPNATRTISKDTHHHNLDFNIFEGINCHGVAEVTISRGRIVWAHGKLQTVPGSGKFIPLLANSPFVFSTHEKREQKIQPRIVERLE</sequence>
<name>DHP1_CAEEL</name>
<organism>
    <name type="scientific">Caenorhabditis elegans</name>
    <dbReference type="NCBI Taxonomy" id="6239"/>
    <lineage>
        <taxon>Eukaryota</taxon>
        <taxon>Metazoa</taxon>
        <taxon>Ecdysozoa</taxon>
        <taxon>Nematoda</taxon>
        <taxon>Chromadorea</taxon>
        <taxon>Rhabditida</taxon>
        <taxon>Rhabditina</taxon>
        <taxon>Rhabditomorpha</taxon>
        <taxon>Rhabditoidea</taxon>
        <taxon>Rhabditidae</taxon>
        <taxon>Peloderinae</taxon>
        <taxon>Caenorhabditis</taxon>
    </lineage>
</organism>
<evidence type="ECO:0000250" key="1"/>
<evidence type="ECO:0000250" key="2">
    <source>
        <dbReference type="UniProtKB" id="Q55DL0"/>
    </source>
</evidence>
<evidence type="ECO:0000250" key="3">
    <source>
        <dbReference type="UniProtKB" id="Q9P903"/>
    </source>
</evidence>
<evidence type="ECO:0000269" key="4">
    <source>
    </source>
</evidence>
<evidence type="ECO:0000305" key="5"/>
<feature type="chain" id="PRO_0000165929" description="Dihydropyrimidinase 1">
    <location>
        <begin position="1"/>
        <end position="489"/>
    </location>
</feature>
<feature type="binding site" evidence="3">
    <location>
        <position position="61"/>
    </location>
    <ligand>
        <name>Zn(2+)</name>
        <dbReference type="ChEBI" id="CHEBI:29105"/>
        <label>1</label>
    </ligand>
</feature>
<feature type="binding site" evidence="3">
    <location>
        <position position="63"/>
    </location>
    <ligand>
        <name>Zn(2+)</name>
        <dbReference type="ChEBI" id="CHEBI:29105"/>
        <label>1</label>
    </ligand>
</feature>
<feature type="binding site" description="via carbamate group" evidence="3">
    <location>
        <position position="156"/>
    </location>
    <ligand>
        <name>Zn(2+)</name>
        <dbReference type="ChEBI" id="CHEBI:29105"/>
        <label>1</label>
    </ligand>
</feature>
<feature type="binding site" description="via carbamate group" evidence="3">
    <location>
        <position position="156"/>
    </location>
    <ligand>
        <name>Zn(2+)</name>
        <dbReference type="ChEBI" id="CHEBI:29105"/>
        <label>2</label>
    </ligand>
</feature>
<feature type="binding site" evidence="3">
    <location>
        <position position="161"/>
    </location>
    <ligand>
        <name>substrate</name>
    </ligand>
</feature>
<feature type="binding site" evidence="3">
    <location>
        <position position="189"/>
    </location>
    <ligand>
        <name>Zn(2+)</name>
        <dbReference type="ChEBI" id="CHEBI:29105"/>
        <label>2</label>
    </ligand>
</feature>
<feature type="binding site" evidence="3">
    <location>
        <position position="245"/>
    </location>
    <ligand>
        <name>Zn(2+)</name>
        <dbReference type="ChEBI" id="CHEBI:29105"/>
        <label>2</label>
    </ligand>
</feature>
<feature type="binding site" evidence="3">
    <location>
        <position position="295"/>
    </location>
    <ligand>
        <name>substrate</name>
    </ligand>
</feature>
<feature type="binding site" evidence="3">
    <location>
        <position position="323"/>
    </location>
    <ligand>
        <name>Zn(2+)</name>
        <dbReference type="ChEBI" id="CHEBI:29105"/>
        <label>1</label>
    </ligand>
</feature>
<feature type="binding site" evidence="3">
    <location>
        <position position="344"/>
    </location>
    <ligand>
        <name>substrate</name>
    </ligand>
</feature>
<feature type="modified residue" description="N6-carboxylysine" evidence="3">
    <location>
        <position position="156"/>
    </location>
</feature>
<proteinExistence type="evidence at protein level"/>
<reference key="1">
    <citation type="journal article" date="2000" name="Gene">
        <title>Cloning and characterization of the Caenorhabditis elegans CeCRMP/DHP-1 and -2; common ancestors of CRMP and dihydropyrimidinase?</title>
        <authorList>
            <person name="Takemoto T."/>
            <person name="Sasaki Y."/>
            <person name="Hamajima N."/>
            <person name="Goshima Y."/>
            <person name="Nonaka M."/>
            <person name="Kimura H."/>
        </authorList>
    </citation>
    <scope>NUCLEOTIDE SEQUENCE [MRNA]</scope>
    <scope>CATALYTIC ACTIVITY</scope>
    <scope>SUBCELLULAR LOCATION</scope>
    <scope>TISSUE SPECIFICITY</scope>
    <scope>DEVELOPMENTAL STAGE</scope>
    <source>
        <strain>Bristol N2</strain>
    </source>
</reference>
<reference key="2">
    <citation type="journal article" date="1998" name="Science">
        <title>Genome sequence of the nematode C. elegans: a platform for investigating biology.</title>
        <authorList>
            <consortium name="The C. elegans sequencing consortium"/>
        </authorList>
    </citation>
    <scope>NUCLEOTIDE SEQUENCE [LARGE SCALE GENOMIC DNA]</scope>
    <source>
        <strain>Bristol N2</strain>
    </source>
</reference>
<reference key="3">
    <citation type="journal article" date="1998" name="Eur. J. Biochem.">
        <title>The Ulip family phosphoproteins -- common and specific properties.</title>
        <authorList>
            <person name="Byk T."/>
            <person name="Ozon S."/>
            <person name="Sobel A."/>
        </authorList>
    </citation>
    <scope>IDENTIFICATION</scope>
</reference>
<protein>
    <recommendedName>
        <fullName>Dihydropyrimidinase 1</fullName>
        <ecNumber evidence="4">3.5.2.2</ecNumber>
    </recommendedName>
    <alternativeName>
        <fullName>CeCRMP/DHP-1</fullName>
    </alternativeName>
    <alternativeName>
        <fullName>UlipB</fullName>
    </alternativeName>
</protein>
<keyword id="KW-0378">Hydrolase</keyword>
<keyword id="KW-0479">Metal-binding</keyword>
<keyword id="KW-0539">Nucleus</keyword>
<keyword id="KW-1185">Reference proteome</keyword>
<keyword id="KW-0862">Zinc</keyword>
<comment type="catalytic activity">
    <reaction evidence="4">
        <text>5,6-dihydrouracil + H2O = 3-(carbamoylamino)propanoate + H(+)</text>
        <dbReference type="Rhea" id="RHEA:16121"/>
        <dbReference type="ChEBI" id="CHEBI:11892"/>
        <dbReference type="ChEBI" id="CHEBI:15377"/>
        <dbReference type="ChEBI" id="CHEBI:15378"/>
        <dbReference type="ChEBI" id="CHEBI:15901"/>
        <dbReference type="EC" id="3.5.2.2"/>
    </reaction>
</comment>
<comment type="cofactor">
    <cofactor evidence="2">
        <name>Zn(2+)</name>
        <dbReference type="ChEBI" id="CHEBI:29105"/>
    </cofactor>
    <text evidence="2">Binds 2 Zn(2+) ions per subunit.</text>
</comment>
<comment type="subunit">
    <text evidence="2">Homotetramer.</text>
</comment>
<comment type="subcellular location">
    <subcellularLocation>
        <location evidence="4">Nucleus</location>
    </subcellularLocation>
</comment>
<comment type="tissue specificity">
    <text evidence="4">In L1-L2 larvae, expressed in body hypodermal cells, hemidesmosomes and in a neuronal cell between the pharynx and ring neuropil. In adults, expression is seen in body hypodermal cells and pharynx.</text>
</comment>
<comment type="developmental stage">
    <text evidence="4">Expressed in dorsal regions of embryos at late gastrula stage, transiently expressed in the developmental process of 3-fold embryo to L1-L2 larval stage.</text>
</comment>
<comment type="PTM">
    <text evidence="1">Carboxylation allows a single lysine to coordinate two zinc ions.</text>
</comment>
<comment type="similarity">
    <text evidence="5">Belongs to the metallo-dependent hydrolases superfamily. Hydantoinase/dihydropyrimidinase family.</text>
</comment>